<keyword id="KW-0106">Calcium</keyword>
<keyword id="KW-1015">Disulfide bond</keyword>
<keyword id="KW-1199">Hemostasis impairing toxin</keyword>
<keyword id="KW-0378">Hydrolase</keyword>
<keyword id="KW-0442">Lipid degradation</keyword>
<keyword id="KW-0443">Lipid metabolism</keyword>
<keyword id="KW-0479">Metal-binding</keyword>
<keyword id="KW-1201">Platelet aggregation inhibiting toxin</keyword>
<keyword id="KW-0964">Secreted</keyword>
<keyword id="KW-0732">Signal</keyword>
<keyword id="KW-0800">Toxin</keyword>
<dbReference type="EC" id="3.1.1.4"/>
<dbReference type="EMBL" id="AF184135">
    <property type="protein sequence ID" value="AAD56558.1"/>
    <property type="molecule type" value="mRNA"/>
</dbReference>
<dbReference type="SMR" id="Q9PUH5"/>
<dbReference type="GO" id="GO:0005576">
    <property type="term" value="C:extracellular region"/>
    <property type="evidence" value="ECO:0007669"/>
    <property type="project" value="UniProtKB-SubCell"/>
</dbReference>
<dbReference type="GO" id="GO:0005509">
    <property type="term" value="F:calcium ion binding"/>
    <property type="evidence" value="ECO:0007669"/>
    <property type="project" value="InterPro"/>
</dbReference>
<dbReference type="GO" id="GO:0047498">
    <property type="term" value="F:calcium-dependent phospholipase A2 activity"/>
    <property type="evidence" value="ECO:0007669"/>
    <property type="project" value="TreeGrafter"/>
</dbReference>
<dbReference type="GO" id="GO:0005543">
    <property type="term" value="F:phospholipid binding"/>
    <property type="evidence" value="ECO:0007669"/>
    <property type="project" value="TreeGrafter"/>
</dbReference>
<dbReference type="GO" id="GO:0090729">
    <property type="term" value="F:toxin activity"/>
    <property type="evidence" value="ECO:0007669"/>
    <property type="project" value="UniProtKB-KW"/>
</dbReference>
<dbReference type="GO" id="GO:0050482">
    <property type="term" value="P:arachidonate secretion"/>
    <property type="evidence" value="ECO:0007669"/>
    <property type="project" value="InterPro"/>
</dbReference>
<dbReference type="GO" id="GO:0016042">
    <property type="term" value="P:lipid catabolic process"/>
    <property type="evidence" value="ECO:0007669"/>
    <property type="project" value="UniProtKB-KW"/>
</dbReference>
<dbReference type="GO" id="GO:0006644">
    <property type="term" value="P:phospholipid metabolic process"/>
    <property type="evidence" value="ECO:0007669"/>
    <property type="project" value="InterPro"/>
</dbReference>
<dbReference type="CDD" id="cd00125">
    <property type="entry name" value="PLA2c"/>
    <property type="match status" value="1"/>
</dbReference>
<dbReference type="FunFam" id="1.20.90.10:FF:000007">
    <property type="entry name" value="Acidic phospholipase A2"/>
    <property type="match status" value="1"/>
</dbReference>
<dbReference type="Gene3D" id="1.20.90.10">
    <property type="entry name" value="Phospholipase A2 domain"/>
    <property type="match status" value="1"/>
</dbReference>
<dbReference type="InterPro" id="IPR001211">
    <property type="entry name" value="PLipase_A2"/>
</dbReference>
<dbReference type="InterPro" id="IPR033112">
    <property type="entry name" value="PLipase_A2_Asp_AS"/>
</dbReference>
<dbReference type="InterPro" id="IPR016090">
    <property type="entry name" value="PLipase_A2_dom"/>
</dbReference>
<dbReference type="InterPro" id="IPR036444">
    <property type="entry name" value="PLipase_A2_dom_sf"/>
</dbReference>
<dbReference type="InterPro" id="IPR033113">
    <property type="entry name" value="PLipase_A2_His_AS"/>
</dbReference>
<dbReference type="PANTHER" id="PTHR11716:SF51">
    <property type="entry name" value="PHOSPHOLIPASE A2"/>
    <property type="match status" value="1"/>
</dbReference>
<dbReference type="PANTHER" id="PTHR11716">
    <property type="entry name" value="PHOSPHOLIPASE A2 FAMILY MEMBER"/>
    <property type="match status" value="1"/>
</dbReference>
<dbReference type="Pfam" id="PF00068">
    <property type="entry name" value="Phospholip_A2_1"/>
    <property type="match status" value="1"/>
</dbReference>
<dbReference type="PRINTS" id="PR00389">
    <property type="entry name" value="PHPHLIPASEA2"/>
</dbReference>
<dbReference type="SMART" id="SM00085">
    <property type="entry name" value="PA2c"/>
    <property type="match status" value="1"/>
</dbReference>
<dbReference type="SUPFAM" id="SSF48619">
    <property type="entry name" value="Phospholipase A2, PLA2"/>
    <property type="match status" value="1"/>
</dbReference>
<dbReference type="PROSITE" id="PS00119">
    <property type="entry name" value="PA2_ASP"/>
    <property type="match status" value="1"/>
</dbReference>
<dbReference type="PROSITE" id="PS00118">
    <property type="entry name" value="PA2_HIS"/>
    <property type="match status" value="1"/>
</dbReference>
<proteinExistence type="evidence at transcript level"/>
<feature type="signal peptide" evidence="2">
    <location>
        <begin position="1"/>
        <end position="19"/>
    </location>
</feature>
<feature type="propeptide" id="PRO_0000022801" evidence="2">
    <location>
        <begin position="20"/>
        <end position="27"/>
    </location>
</feature>
<feature type="chain" id="PRO_0000022802" description="Basic phospholipase A2 S11-61">
    <location>
        <begin position="28"/>
        <end position="145"/>
    </location>
</feature>
<feature type="active site" evidence="1">
    <location>
        <position position="75"/>
    </location>
</feature>
<feature type="active site" evidence="1">
    <location>
        <position position="119"/>
    </location>
</feature>
<feature type="binding site" evidence="1">
    <location>
        <position position="55"/>
    </location>
    <ligand>
        <name>Ca(2+)</name>
        <dbReference type="ChEBI" id="CHEBI:29108"/>
    </ligand>
</feature>
<feature type="binding site" evidence="1">
    <location>
        <position position="57"/>
    </location>
    <ligand>
        <name>Ca(2+)</name>
        <dbReference type="ChEBI" id="CHEBI:29108"/>
    </ligand>
</feature>
<feature type="binding site" evidence="1">
    <location>
        <position position="59"/>
    </location>
    <ligand>
        <name>Ca(2+)</name>
        <dbReference type="ChEBI" id="CHEBI:29108"/>
    </ligand>
</feature>
<feature type="binding site" evidence="1">
    <location>
        <position position="76"/>
    </location>
    <ligand>
        <name>Ca(2+)</name>
        <dbReference type="ChEBI" id="CHEBI:29108"/>
    </ligand>
</feature>
<feature type="disulfide bond" evidence="1">
    <location>
        <begin position="38"/>
        <end position="98"/>
    </location>
</feature>
<feature type="disulfide bond" evidence="1">
    <location>
        <begin position="54"/>
        <end position="144"/>
    </location>
</feature>
<feature type="disulfide bond" evidence="1">
    <location>
        <begin position="56"/>
        <end position="72"/>
    </location>
</feature>
<feature type="disulfide bond" evidence="1">
    <location>
        <begin position="71"/>
        <end position="125"/>
    </location>
</feature>
<feature type="disulfide bond" evidence="1">
    <location>
        <begin position="78"/>
        <end position="118"/>
    </location>
</feature>
<feature type="disulfide bond" evidence="1">
    <location>
        <begin position="87"/>
        <end position="111"/>
    </location>
</feature>
<feature type="disulfide bond" evidence="1">
    <location>
        <begin position="105"/>
        <end position="116"/>
    </location>
</feature>
<evidence type="ECO:0000250" key="1"/>
<evidence type="ECO:0000255" key="2"/>
<evidence type="ECO:0000255" key="3">
    <source>
        <dbReference type="PROSITE-ProRule" id="PRU10035"/>
    </source>
</evidence>
<evidence type="ECO:0000255" key="4">
    <source>
        <dbReference type="PROSITE-ProRule" id="PRU10036"/>
    </source>
</evidence>
<evidence type="ECO:0000305" key="5"/>
<accession>Q9PUH5</accession>
<name>PA2B9_AUSSU</name>
<comment type="function">
    <text evidence="1">Snake venom phospholipase A2 (PLA2) that inhibits collagen-induced platelet aggregation. PLA2 catalyzes the calcium-dependent hydrolysis of the 2-acyl groups in 3-sn-phosphoglycerides (By similarity).</text>
</comment>
<comment type="catalytic activity">
    <reaction evidence="3 4">
        <text>a 1,2-diacyl-sn-glycero-3-phosphocholine + H2O = a 1-acyl-sn-glycero-3-phosphocholine + a fatty acid + H(+)</text>
        <dbReference type="Rhea" id="RHEA:15801"/>
        <dbReference type="ChEBI" id="CHEBI:15377"/>
        <dbReference type="ChEBI" id="CHEBI:15378"/>
        <dbReference type="ChEBI" id="CHEBI:28868"/>
        <dbReference type="ChEBI" id="CHEBI:57643"/>
        <dbReference type="ChEBI" id="CHEBI:58168"/>
        <dbReference type="EC" id="3.1.1.4"/>
    </reaction>
</comment>
<comment type="cofactor">
    <cofactor evidence="1">
        <name>Ca(2+)</name>
        <dbReference type="ChEBI" id="CHEBI:29108"/>
    </cofactor>
    <text evidence="1">Binds 1 Ca(2+) ion.</text>
</comment>
<comment type="subcellular location">
    <subcellularLocation>
        <location evidence="1">Secreted</location>
    </subcellularLocation>
</comment>
<comment type="tissue specificity">
    <text>Expressed by the venom gland.</text>
</comment>
<comment type="similarity">
    <text evidence="5">Belongs to the phospholipase A2 family. Group I subfamily. D49 sub-subfamily.</text>
</comment>
<organism>
    <name type="scientific">Austrelaps superbus</name>
    <name type="common">Lowland copperhead snake</name>
    <name type="synonym">Hoplocephalus superbus</name>
    <dbReference type="NCBI Taxonomy" id="29156"/>
    <lineage>
        <taxon>Eukaryota</taxon>
        <taxon>Metazoa</taxon>
        <taxon>Chordata</taxon>
        <taxon>Craniata</taxon>
        <taxon>Vertebrata</taxon>
        <taxon>Euteleostomi</taxon>
        <taxon>Lepidosauria</taxon>
        <taxon>Squamata</taxon>
        <taxon>Bifurcata</taxon>
        <taxon>Unidentata</taxon>
        <taxon>Episquamata</taxon>
        <taxon>Toxicofera</taxon>
        <taxon>Serpentes</taxon>
        <taxon>Colubroidea</taxon>
        <taxon>Elapidae</taxon>
        <taxon>Hydrophiinae</taxon>
        <taxon>Austrelaps</taxon>
    </lineage>
</organism>
<protein>
    <recommendedName>
        <fullName>Basic phospholipase A2 S11-61</fullName>
        <shortName>svPLA2</shortName>
        <ecNumber>3.1.1.4</ecNumber>
    </recommendedName>
    <alternativeName>
        <fullName>ASPLA9</fullName>
    </alternativeName>
    <alternativeName>
        <fullName>Phosphatidylcholine 2-acylhydrolase</fullName>
    </alternativeName>
</protein>
<reference key="1">
    <citation type="journal article" date="2000" name="Arch. Biochem. Biophys.">
        <title>Phospholipase A(2) with platelet aggregation inhibitor activity from Austrelaps superbus venom: protein purification and cDNA cloning.</title>
        <authorList>
            <person name="Singh S.B."/>
            <person name="Armugam A."/>
            <person name="Kini R.M."/>
            <person name="Jeyaseelan K."/>
        </authorList>
    </citation>
    <scope>NUCLEOTIDE SEQUENCE [MRNA]</scope>
    <source>
        <tissue>Venom gland</tissue>
    </source>
</reference>
<sequence length="145" mass="16007">MYPVHLLVLLAVCVSLLGASNIPPQPLNLYQFGNMIQCANHGRRPTQHYTDYGCYCGKGGSGTPVDELDRCCKTHDDCYTEAGKKGCYPKLTLYSWKCTGKAPTCNSKTGCKRTVCDCDATAAKCFAKAPYNNKNYNIDTKKRCQ</sequence>